<accession>Q495M9</accession>
<accession>Q8N251</accession>
<dbReference type="EMBL" id="AK091243">
    <property type="protein sequence ID" value="BAC03619.1"/>
    <property type="molecule type" value="mRNA"/>
</dbReference>
<dbReference type="EMBL" id="BC101096">
    <property type="protein sequence ID" value="AAI01097.1"/>
    <property type="molecule type" value="mRNA"/>
</dbReference>
<dbReference type="EMBL" id="BC101097">
    <property type="protein sequence ID" value="AAI01098.1"/>
    <property type="molecule type" value="mRNA"/>
</dbReference>
<dbReference type="EMBL" id="BC101098">
    <property type="protein sequence ID" value="AAI01099.1"/>
    <property type="molecule type" value="mRNA"/>
</dbReference>
<dbReference type="EMBL" id="BC101099">
    <property type="protein sequence ID" value="AAI01100.1"/>
    <property type="molecule type" value="mRNA"/>
</dbReference>
<dbReference type="CCDS" id="CCDS32725.1"/>
<dbReference type="RefSeq" id="NP_001269418.1">
    <property type="nucleotide sequence ID" value="NM_001282489.2"/>
</dbReference>
<dbReference type="RefSeq" id="NP_775748.2">
    <property type="nucleotide sequence ID" value="NM_173477.4"/>
</dbReference>
<dbReference type="PDB" id="2L7T">
    <property type="method" value="NMR"/>
    <property type="chains" value="A=370-380"/>
</dbReference>
<dbReference type="PDB" id="3K1R">
    <property type="method" value="X-ray"/>
    <property type="resolution" value="2.30 A"/>
    <property type="chains" value="B=388-461"/>
</dbReference>
<dbReference type="PDB" id="3PVL">
    <property type="method" value="X-ray"/>
    <property type="resolution" value="2.80 A"/>
    <property type="chains" value="B=295-390"/>
</dbReference>
<dbReference type="PDBsum" id="2L7T"/>
<dbReference type="PDBsum" id="3K1R"/>
<dbReference type="PDBsum" id="3PVL"/>
<dbReference type="SMR" id="Q495M9"/>
<dbReference type="BioGRID" id="125876">
    <property type="interactions" value="24"/>
</dbReference>
<dbReference type="CORUM" id="Q495M9"/>
<dbReference type="DIP" id="DIP-41617N"/>
<dbReference type="ELM" id="Q495M9"/>
<dbReference type="FunCoup" id="Q495M9">
    <property type="interactions" value="29"/>
</dbReference>
<dbReference type="IntAct" id="Q495M9">
    <property type="interactions" value="28"/>
</dbReference>
<dbReference type="MINT" id="Q495M9"/>
<dbReference type="STRING" id="9606.ENSP00000480279"/>
<dbReference type="GlyGen" id="Q495M9">
    <property type="glycosylation" value="1 site"/>
</dbReference>
<dbReference type="iPTMnet" id="Q495M9"/>
<dbReference type="PhosphoSitePlus" id="Q495M9"/>
<dbReference type="BioMuta" id="USH1G"/>
<dbReference type="DMDM" id="81175048"/>
<dbReference type="MassIVE" id="Q495M9"/>
<dbReference type="PaxDb" id="9606-ENSP00000480279"/>
<dbReference type="PeptideAtlas" id="Q495M9"/>
<dbReference type="ProteomicsDB" id="61966"/>
<dbReference type="Antibodypedia" id="19482">
    <property type="antibodies" value="49 antibodies from 17 providers"/>
</dbReference>
<dbReference type="DNASU" id="124590"/>
<dbReference type="Ensembl" id="ENST00000614341.5">
    <property type="protein sequence ID" value="ENSP00000480279.1"/>
    <property type="gene ID" value="ENSG00000182040.9"/>
</dbReference>
<dbReference type="GeneID" id="124590"/>
<dbReference type="KEGG" id="hsa:124590"/>
<dbReference type="MANE-Select" id="ENST00000614341.5">
    <property type="protein sequence ID" value="ENSP00000480279.1"/>
    <property type="RefSeq nucleotide sequence ID" value="NM_173477.5"/>
    <property type="RefSeq protein sequence ID" value="NP_775748.2"/>
</dbReference>
<dbReference type="UCSC" id="uc032fra.2">
    <property type="organism name" value="human"/>
</dbReference>
<dbReference type="AGR" id="HGNC:16356"/>
<dbReference type="CTD" id="124590"/>
<dbReference type="DisGeNET" id="124590"/>
<dbReference type="GeneCards" id="USH1G"/>
<dbReference type="GeneReviews" id="USH1G"/>
<dbReference type="HGNC" id="HGNC:16356">
    <property type="gene designation" value="USH1G"/>
</dbReference>
<dbReference type="HPA" id="ENSG00000182040">
    <property type="expression patterns" value="Tissue enhanced (esophagus, skin)"/>
</dbReference>
<dbReference type="MalaCards" id="USH1G"/>
<dbReference type="MIM" id="276900">
    <property type="type" value="phenotype"/>
</dbReference>
<dbReference type="MIM" id="606943">
    <property type="type" value="phenotype"/>
</dbReference>
<dbReference type="MIM" id="607696">
    <property type="type" value="gene"/>
</dbReference>
<dbReference type="neXtProt" id="NX_Q495M9"/>
<dbReference type="OpenTargets" id="ENSG00000182040"/>
<dbReference type="Orphanet" id="231169">
    <property type="disease" value="Usher syndrome type 1"/>
</dbReference>
<dbReference type="PharmGKB" id="PA38126"/>
<dbReference type="VEuPathDB" id="HostDB:ENSG00000182040"/>
<dbReference type="eggNOG" id="KOG0504">
    <property type="taxonomic scope" value="Eukaryota"/>
</dbReference>
<dbReference type="GeneTree" id="ENSGT00390000017548"/>
<dbReference type="HOGENOM" id="CLU_028071_0_0_1"/>
<dbReference type="InParanoid" id="Q495M9"/>
<dbReference type="OMA" id="VMYVGTF"/>
<dbReference type="OrthoDB" id="76949at2759"/>
<dbReference type="PAN-GO" id="Q495M9">
    <property type="GO annotations" value="0 GO annotations based on evolutionary models"/>
</dbReference>
<dbReference type="PhylomeDB" id="Q495M9"/>
<dbReference type="TreeFam" id="TF324946"/>
<dbReference type="PathwayCommons" id="Q495M9"/>
<dbReference type="Reactome" id="R-HSA-9662360">
    <property type="pathway name" value="Sensory processing of sound by inner hair cells of the cochlea"/>
</dbReference>
<dbReference type="Reactome" id="R-HSA-9662361">
    <property type="pathway name" value="Sensory processing of sound by outer hair cells of the cochlea"/>
</dbReference>
<dbReference type="SignaLink" id="Q495M9"/>
<dbReference type="SIGNOR" id="Q495M9"/>
<dbReference type="BioGRID-ORCS" id="124590">
    <property type="hits" value="101 hits in 1143 CRISPR screens"/>
</dbReference>
<dbReference type="CD-CODE" id="F345034F">
    <property type="entry name" value="Signaling cluster"/>
</dbReference>
<dbReference type="EvolutionaryTrace" id="Q495M9"/>
<dbReference type="GeneWiki" id="USH1G"/>
<dbReference type="GenomeRNAi" id="124590"/>
<dbReference type="Pharos" id="Q495M9">
    <property type="development level" value="Tbio"/>
</dbReference>
<dbReference type="PRO" id="PR:Q495M9"/>
<dbReference type="Proteomes" id="UP000005640">
    <property type="component" value="Chromosome 17"/>
</dbReference>
<dbReference type="RNAct" id="Q495M9">
    <property type="molecule type" value="protein"/>
</dbReference>
<dbReference type="Bgee" id="ENSG00000182040">
    <property type="expression patterns" value="Expressed in lower esophagus mucosa and 56 other cell types or tissues"/>
</dbReference>
<dbReference type="ExpressionAtlas" id="Q495M9">
    <property type="expression patterns" value="baseline and differential"/>
</dbReference>
<dbReference type="GO" id="GO:0015629">
    <property type="term" value="C:actin cytoskeleton"/>
    <property type="evidence" value="ECO:0000250"/>
    <property type="project" value="HGNC-UCL"/>
</dbReference>
<dbReference type="GO" id="GO:0015030">
    <property type="term" value="C:Cajal body"/>
    <property type="evidence" value="ECO:0000314"/>
    <property type="project" value="UniProtKB"/>
</dbReference>
<dbReference type="GO" id="GO:0005813">
    <property type="term" value="C:centrosome"/>
    <property type="evidence" value="ECO:0007669"/>
    <property type="project" value="UniProtKB-SubCell"/>
</dbReference>
<dbReference type="GO" id="GO:0036064">
    <property type="term" value="C:ciliary basal body"/>
    <property type="evidence" value="ECO:0007669"/>
    <property type="project" value="Ensembl"/>
</dbReference>
<dbReference type="GO" id="GO:0097546">
    <property type="term" value="C:ciliary base"/>
    <property type="evidence" value="ECO:0000314"/>
    <property type="project" value="UniProtKB"/>
</dbReference>
<dbReference type="GO" id="GO:0005829">
    <property type="term" value="C:cytosol"/>
    <property type="evidence" value="ECO:0007669"/>
    <property type="project" value="UniProtKB-SubCell"/>
</dbReference>
<dbReference type="GO" id="GO:0016607">
    <property type="term" value="C:nuclear speck"/>
    <property type="evidence" value="ECO:0000314"/>
    <property type="project" value="UniProtKB"/>
</dbReference>
<dbReference type="GO" id="GO:0097733">
    <property type="term" value="C:photoreceptor cell cilium"/>
    <property type="evidence" value="ECO:0000314"/>
    <property type="project" value="UniProtKB"/>
</dbReference>
<dbReference type="GO" id="GO:0032391">
    <property type="term" value="C:photoreceptor connecting cilium"/>
    <property type="evidence" value="ECO:0007669"/>
    <property type="project" value="Ensembl"/>
</dbReference>
<dbReference type="GO" id="GO:0001917">
    <property type="term" value="C:photoreceptor inner segment"/>
    <property type="evidence" value="ECO:0000314"/>
    <property type="project" value="UniProtKB"/>
</dbReference>
<dbReference type="GO" id="GO:0005886">
    <property type="term" value="C:plasma membrane"/>
    <property type="evidence" value="ECO:0007669"/>
    <property type="project" value="UniProtKB-SubCell"/>
</dbReference>
<dbReference type="GO" id="GO:0042802">
    <property type="term" value="F:identical protein binding"/>
    <property type="evidence" value="ECO:0000353"/>
    <property type="project" value="IntAct"/>
</dbReference>
<dbReference type="GO" id="GO:0030507">
    <property type="term" value="F:spectrin binding"/>
    <property type="evidence" value="ECO:0000314"/>
    <property type="project" value="MGI"/>
</dbReference>
<dbReference type="GO" id="GO:0050957">
    <property type="term" value="P:equilibrioception"/>
    <property type="evidence" value="ECO:0000315"/>
    <property type="project" value="HGNC-UCL"/>
</dbReference>
<dbReference type="GO" id="GO:0042472">
    <property type="term" value="P:inner ear morphogenesis"/>
    <property type="evidence" value="ECO:0007669"/>
    <property type="project" value="Ensembl"/>
</dbReference>
<dbReference type="GO" id="GO:0060122">
    <property type="term" value="P:inner ear receptor cell stereocilium organization"/>
    <property type="evidence" value="ECO:0007669"/>
    <property type="project" value="Ensembl"/>
</dbReference>
<dbReference type="GO" id="GO:0045494">
    <property type="term" value="P:photoreceptor cell maintenance"/>
    <property type="evidence" value="ECO:0000315"/>
    <property type="project" value="HGNC-UCL"/>
</dbReference>
<dbReference type="GO" id="GO:2000369">
    <property type="term" value="P:regulation of clathrin-dependent endocytosis"/>
    <property type="evidence" value="ECO:0000315"/>
    <property type="project" value="UniProtKB"/>
</dbReference>
<dbReference type="GO" id="GO:0050953">
    <property type="term" value="P:sensory perception of light stimulus"/>
    <property type="evidence" value="ECO:0000315"/>
    <property type="project" value="HGNC-UCL"/>
</dbReference>
<dbReference type="GO" id="GO:0007605">
    <property type="term" value="P:sensory perception of sound"/>
    <property type="evidence" value="ECO:0000315"/>
    <property type="project" value="HGNC-UCL"/>
</dbReference>
<dbReference type="CDD" id="cd21803">
    <property type="entry name" value="CEN_USH1G"/>
    <property type="match status" value="1"/>
</dbReference>
<dbReference type="CDD" id="cd09586">
    <property type="entry name" value="SAM_USH1G"/>
    <property type="match status" value="1"/>
</dbReference>
<dbReference type="FunFam" id="1.10.150.50:FF:000034">
    <property type="entry name" value="ankyrin repeat and SAM domain-containing protein 4B"/>
    <property type="match status" value="1"/>
</dbReference>
<dbReference type="FunFam" id="1.25.40.20:FF:000074">
    <property type="entry name" value="Usher syndrome type-1G protein isoform X1"/>
    <property type="match status" value="1"/>
</dbReference>
<dbReference type="Gene3D" id="1.25.40.20">
    <property type="entry name" value="Ankyrin repeat-containing domain"/>
    <property type="match status" value="1"/>
</dbReference>
<dbReference type="Gene3D" id="1.10.150.50">
    <property type="entry name" value="Transcription Factor, Ets-1"/>
    <property type="match status" value="1"/>
</dbReference>
<dbReference type="InterPro" id="IPR002110">
    <property type="entry name" value="Ankyrin_rpt"/>
</dbReference>
<dbReference type="InterPro" id="IPR036770">
    <property type="entry name" value="Ankyrin_rpt-contain_sf"/>
</dbReference>
<dbReference type="InterPro" id="IPR001660">
    <property type="entry name" value="SAM"/>
</dbReference>
<dbReference type="InterPro" id="IPR013761">
    <property type="entry name" value="SAM/pointed_sf"/>
</dbReference>
<dbReference type="InterPro" id="IPR037602">
    <property type="entry name" value="USH1G_SAM"/>
</dbReference>
<dbReference type="PANTHER" id="PTHR24161">
    <property type="entry name" value="ANK_REP_REGION DOMAIN-CONTAINING PROTEIN-RELATED"/>
    <property type="match status" value="1"/>
</dbReference>
<dbReference type="PANTHER" id="PTHR24161:SF24">
    <property type="entry name" value="PRE-MRNA SPLICING REGULATOR USH1G"/>
    <property type="match status" value="1"/>
</dbReference>
<dbReference type="Pfam" id="PF12796">
    <property type="entry name" value="Ank_2"/>
    <property type="match status" value="1"/>
</dbReference>
<dbReference type="Pfam" id="PF00536">
    <property type="entry name" value="SAM_1"/>
    <property type="match status" value="1"/>
</dbReference>
<dbReference type="SMART" id="SM00248">
    <property type="entry name" value="ANK"/>
    <property type="match status" value="3"/>
</dbReference>
<dbReference type="SMART" id="SM00454">
    <property type="entry name" value="SAM"/>
    <property type="match status" value="1"/>
</dbReference>
<dbReference type="SUPFAM" id="SSF48403">
    <property type="entry name" value="Ankyrin repeat"/>
    <property type="match status" value="1"/>
</dbReference>
<dbReference type="SUPFAM" id="SSF47769">
    <property type="entry name" value="SAM/Pointed domain"/>
    <property type="match status" value="1"/>
</dbReference>
<dbReference type="PROSITE" id="PS50297">
    <property type="entry name" value="ANK_REP_REGION"/>
    <property type="match status" value="1"/>
</dbReference>
<dbReference type="PROSITE" id="PS50088">
    <property type="entry name" value="ANK_REPEAT"/>
    <property type="match status" value="2"/>
</dbReference>
<evidence type="ECO:0000250" key="1"/>
<evidence type="ECO:0000250" key="2">
    <source>
        <dbReference type="UniProtKB" id="Q80T11"/>
    </source>
</evidence>
<evidence type="ECO:0000256" key="3">
    <source>
        <dbReference type="SAM" id="MobiDB-lite"/>
    </source>
</evidence>
<evidence type="ECO:0000269" key="4">
    <source>
    </source>
</evidence>
<evidence type="ECO:0000269" key="5">
    <source>
    </source>
</evidence>
<evidence type="ECO:0000269" key="6">
    <source>
    </source>
</evidence>
<evidence type="ECO:0000269" key="7">
    <source>
    </source>
</evidence>
<evidence type="ECO:0000269" key="8">
    <source>
    </source>
</evidence>
<evidence type="ECO:0000269" key="9">
    <source>
    </source>
</evidence>
<evidence type="ECO:0000269" key="10">
    <source>
    </source>
</evidence>
<evidence type="ECO:0000269" key="11">
    <source>
    </source>
</evidence>
<evidence type="ECO:0000269" key="12">
    <source>
    </source>
</evidence>
<evidence type="ECO:0000269" key="13">
    <source>
    </source>
</evidence>
<evidence type="ECO:0000305" key="14"/>
<evidence type="ECO:0007829" key="15">
    <source>
        <dbReference type="PDB" id="2L7T"/>
    </source>
</evidence>
<evidence type="ECO:0007829" key="16">
    <source>
        <dbReference type="PDB" id="3K1R"/>
    </source>
</evidence>
<evidence type="ECO:0007829" key="17">
    <source>
        <dbReference type="PDB" id="3PVL"/>
    </source>
</evidence>
<name>USH1G_HUMAN</name>
<feature type="chain" id="PRO_0000067077" description="pre-mRNA splicing regulator USH1G">
    <location>
        <begin position="1"/>
        <end position="461"/>
    </location>
</feature>
<feature type="repeat" description="ANK 1">
    <location>
        <begin position="31"/>
        <end position="60"/>
    </location>
</feature>
<feature type="repeat" description="ANK 2">
    <location>
        <begin position="64"/>
        <end position="93"/>
    </location>
</feature>
<feature type="repeat" description="ANK 3">
    <location>
        <begin position="97"/>
        <end position="126"/>
    </location>
</feature>
<feature type="domain" description="SAM">
    <location>
        <begin position="385"/>
        <end position="447"/>
    </location>
</feature>
<feature type="region of interest" description="Disordered" evidence="3">
    <location>
        <begin position="208"/>
        <end position="243"/>
    </location>
</feature>
<feature type="region of interest" description="Disordered" evidence="3">
    <location>
        <begin position="332"/>
        <end position="368"/>
    </location>
</feature>
<feature type="compositionally biased region" description="Basic residues" evidence="3">
    <location>
        <begin position="210"/>
        <end position="222"/>
    </location>
</feature>
<feature type="modified residue" description="Phosphoserine; by CK2" evidence="10">
    <location>
        <position position="422"/>
    </location>
</feature>
<feature type="sequence variant" id="VAR_023739" description="In USH1G; reduced interaction with IFT52 and IFT57; dbSNP:rs104894651." evidence="4 12">
    <original>L</original>
    <variation>P</variation>
    <location>
        <position position="48"/>
    </location>
</feature>
<feature type="sequence variant" id="VAR_072369" description="Found in patients with non-syndromic sensorineural hearing loss; likely pathogenic; reduced interaction with IFT52 and IFT57; failure to rescue the USH1C splicing defect seen in USH1G-depleted cells; dbSNP:rs149529031." evidence="11 12">
    <original>M</original>
    <variation>V</variation>
    <location>
        <position position="104"/>
    </location>
</feature>
<feature type="sequence variant" id="VAR_060468" description="In USH1G; atypical form with mild retinitis pigmentosa and normal vestibular function; also found in patients with autosomal recessive non-syndromic deafness; strongly reduced affinity for USH1C; dbSNP:rs397517925." evidence="5 7">
    <original>D</original>
    <variation>V</variation>
    <location>
        <position position="458"/>
    </location>
</feature>
<feature type="mutagenesis site" description="Reduced affinity for MYO7A." evidence="8">
    <original>F</original>
    <variation>E</variation>
    <location>
        <position position="307"/>
    </location>
</feature>
<feature type="mutagenesis site" description="Reduced affinity for MYO7A." evidence="8">
    <original>F</original>
    <variation>E</variation>
    <location>
        <position position="317"/>
    </location>
</feature>
<feature type="mutagenesis site" description="Strongly reduced affinity for MYO7A." evidence="8">
    <original>W</original>
    <variation>Q</variation>
    <location>
        <position position="374"/>
    </location>
</feature>
<feature type="mutagenesis site" description="Abolishes interaction with MAGI2." evidence="10">
    <original>S</original>
    <variation>A</variation>
    <location>
        <position position="422"/>
    </location>
</feature>
<feature type="mutagenesis site" description="Phosphomimetic mutant; does not affect interaction with MAGI2." evidence="10">
    <original>S</original>
    <variation>E</variation>
    <location>
        <position position="422"/>
    </location>
</feature>
<feature type="sequence conflict" description="In Ref. 1; BAC03619." evidence="14" ref="1">
    <original>D</original>
    <variation>N</variation>
    <location>
        <position position="300"/>
    </location>
</feature>
<feature type="sequence conflict" description="In Ref. 1; BAC03619." evidence="14" ref="1">
    <original>E</original>
    <variation>G</variation>
    <location>
        <position position="402"/>
    </location>
</feature>
<feature type="strand" evidence="17">
    <location>
        <begin position="307"/>
        <end position="309"/>
    </location>
</feature>
<feature type="turn" evidence="17">
    <location>
        <begin position="310"/>
        <end position="312"/>
    </location>
</feature>
<feature type="strand" evidence="17">
    <location>
        <begin position="313"/>
        <end position="315"/>
    </location>
</feature>
<feature type="strand" evidence="15">
    <location>
        <begin position="375"/>
        <end position="377"/>
    </location>
</feature>
<feature type="helix" evidence="16">
    <location>
        <begin position="391"/>
        <end position="397"/>
    </location>
</feature>
<feature type="turn" evidence="16">
    <location>
        <begin position="398"/>
        <end position="400"/>
    </location>
</feature>
<feature type="helix" evidence="16">
    <location>
        <begin position="402"/>
        <end position="404"/>
    </location>
</feature>
<feature type="helix" evidence="16">
    <location>
        <begin position="405"/>
        <end position="410"/>
    </location>
</feature>
<feature type="helix" evidence="16">
    <location>
        <begin position="415"/>
        <end position="418"/>
    </location>
</feature>
<feature type="helix" evidence="16">
    <location>
        <begin position="423"/>
        <end position="428"/>
    </location>
</feature>
<feature type="helix" evidence="16">
    <location>
        <begin position="433"/>
        <end position="451"/>
    </location>
</feature>
<feature type="strand" evidence="16">
    <location>
        <begin position="459"/>
        <end position="461"/>
    </location>
</feature>
<keyword id="KW-0002">3D-structure</keyword>
<keyword id="KW-0040">ANK repeat</keyword>
<keyword id="KW-1003">Cell membrane</keyword>
<keyword id="KW-0966">Cell projection</keyword>
<keyword id="KW-0963">Cytoplasm</keyword>
<keyword id="KW-0206">Cytoskeleton</keyword>
<keyword id="KW-0209">Deafness</keyword>
<keyword id="KW-0225">Disease variant</keyword>
<keyword id="KW-1009">Hearing</keyword>
<keyword id="KW-0472">Membrane</keyword>
<keyword id="KW-0539">Nucleus</keyword>
<keyword id="KW-0597">Phosphoprotein</keyword>
<keyword id="KW-1267">Proteomics identification</keyword>
<keyword id="KW-1185">Reference proteome</keyword>
<keyword id="KW-0677">Repeat</keyword>
<keyword id="KW-0682">Retinitis pigmentosa</keyword>
<keyword id="KW-0836">Usher syndrome</keyword>
<organism>
    <name type="scientific">Homo sapiens</name>
    <name type="common">Human</name>
    <dbReference type="NCBI Taxonomy" id="9606"/>
    <lineage>
        <taxon>Eukaryota</taxon>
        <taxon>Metazoa</taxon>
        <taxon>Chordata</taxon>
        <taxon>Craniata</taxon>
        <taxon>Vertebrata</taxon>
        <taxon>Euteleostomi</taxon>
        <taxon>Mammalia</taxon>
        <taxon>Eutheria</taxon>
        <taxon>Euarchontoglires</taxon>
        <taxon>Primates</taxon>
        <taxon>Haplorrhini</taxon>
        <taxon>Catarrhini</taxon>
        <taxon>Hominidae</taxon>
        <taxon>Homo</taxon>
    </lineage>
</organism>
<reference key="1">
    <citation type="journal article" date="2004" name="Nat. Genet.">
        <title>Complete sequencing and characterization of 21,243 full-length human cDNAs.</title>
        <authorList>
            <person name="Ota T."/>
            <person name="Suzuki Y."/>
            <person name="Nishikawa T."/>
            <person name="Otsuki T."/>
            <person name="Sugiyama T."/>
            <person name="Irie R."/>
            <person name="Wakamatsu A."/>
            <person name="Hayashi K."/>
            <person name="Sato H."/>
            <person name="Nagai K."/>
            <person name="Kimura K."/>
            <person name="Makita H."/>
            <person name="Sekine M."/>
            <person name="Obayashi M."/>
            <person name="Nishi T."/>
            <person name="Shibahara T."/>
            <person name="Tanaka T."/>
            <person name="Ishii S."/>
            <person name="Yamamoto J."/>
            <person name="Saito K."/>
            <person name="Kawai Y."/>
            <person name="Isono Y."/>
            <person name="Nakamura Y."/>
            <person name="Nagahari K."/>
            <person name="Murakami K."/>
            <person name="Yasuda T."/>
            <person name="Iwayanagi T."/>
            <person name="Wagatsuma M."/>
            <person name="Shiratori A."/>
            <person name="Sudo H."/>
            <person name="Hosoiri T."/>
            <person name="Kaku Y."/>
            <person name="Kodaira H."/>
            <person name="Kondo H."/>
            <person name="Sugawara M."/>
            <person name="Takahashi M."/>
            <person name="Kanda K."/>
            <person name="Yokoi T."/>
            <person name="Furuya T."/>
            <person name="Kikkawa E."/>
            <person name="Omura Y."/>
            <person name="Abe K."/>
            <person name="Kamihara K."/>
            <person name="Katsuta N."/>
            <person name="Sato K."/>
            <person name="Tanikawa M."/>
            <person name="Yamazaki M."/>
            <person name="Ninomiya K."/>
            <person name="Ishibashi T."/>
            <person name="Yamashita H."/>
            <person name="Murakawa K."/>
            <person name="Fujimori K."/>
            <person name="Tanai H."/>
            <person name="Kimata M."/>
            <person name="Watanabe M."/>
            <person name="Hiraoka S."/>
            <person name="Chiba Y."/>
            <person name="Ishida S."/>
            <person name="Ono Y."/>
            <person name="Takiguchi S."/>
            <person name="Watanabe S."/>
            <person name="Yosida M."/>
            <person name="Hotuta T."/>
            <person name="Kusano J."/>
            <person name="Kanehori K."/>
            <person name="Takahashi-Fujii A."/>
            <person name="Hara H."/>
            <person name="Tanase T.-O."/>
            <person name="Nomura Y."/>
            <person name="Togiya S."/>
            <person name="Komai F."/>
            <person name="Hara R."/>
            <person name="Takeuchi K."/>
            <person name="Arita M."/>
            <person name="Imose N."/>
            <person name="Musashino K."/>
            <person name="Yuuki H."/>
            <person name="Oshima A."/>
            <person name="Sasaki N."/>
            <person name="Aotsuka S."/>
            <person name="Yoshikawa Y."/>
            <person name="Matsunawa H."/>
            <person name="Ichihara T."/>
            <person name="Shiohata N."/>
            <person name="Sano S."/>
            <person name="Moriya S."/>
            <person name="Momiyama H."/>
            <person name="Satoh N."/>
            <person name="Takami S."/>
            <person name="Terashima Y."/>
            <person name="Suzuki O."/>
            <person name="Nakagawa S."/>
            <person name="Senoh A."/>
            <person name="Mizoguchi H."/>
            <person name="Goto Y."/>
            <person name="Shimizu F."/>
            <person name="Wakebe H."/>
            <person name="Hishigaki H."/>
            <person name="Watanabe T."/>
            <person name="Sugiyama A."/>
            <person name="Takemoto M."/>
            <person name="Kawakami B."/>
            <person name="Yamazaki M."/>
            <person name="Watanabe K."/>
            <person name="Kumagai A."/>
            <person name="Itakura S."/>
            <person name="Fukuzumi Y."/>
            <person name="Fujimori Y."/>
            <person name="Komiyama M."/>
            <person name="Tashiro H."/>
            <person name="Tanigami A."/>
            <person name="Fujiwara T."/>
            <person name="Ono T."/>
            <person name="Yamada K."/>
            <person name="Fujii Y."/>
            <person name="Ozaki K."/>
            <person name="Hirao M."/>
            <person name="Ohmori Y."/>
            <person name="Kawabata A."/>
            <person name="Hikiji T."/>
            <person name="Kobatake N."/>
            <person name="Inagaki H."/>
            <person name="Ikema Y."/>
            <person name="Okamoto S."/>
            <person name="Okitani R."/>
            <person name="Kawakami T."/>
            <person name="Noguchi S."/>
            <person name="Itoh T."/>
            <person name="Shigeta K."/>
            <person name="Senba T."/>
            <person name="Matsumura K."/>
            <person name="Nakajima Y."/>
            <person name="Mizuno T."/>
            <person name="Morinaga M."/>
            <person name="Sasaki M."/>
            <person name="Togashi T."/>
            <person name="Oyama M."/>
            <person name="Hata H."/>
            <person name="Watanabe M."/>
            <person name="Komatsu T."/>
            <person name="Mizushima-Sugano J."/>
            <person name="Satoh T."/>
            <person name="Shirai Y."/>
            <person name="Takahashi Y."/>
            <person name="Nakagawa K."/>
            <person name="Okumura K."/>
            <person name="Nagase T."/>
            <person name="Nomura N."/>
            <person name="Kikuchi H."/>
            <person name="Masuho Y."/>
            <person name="Yamashita R."/>
            <person name="Nakai K."/>
            <person name="Yada T."/>
            <person name="Nakamura Y."/>
            <person name="Ohara O."/>
            <person name="Isogai T."/>
            <person name="Sugano S."/>
        </authorList>
    </citation>
    <scope>NUCLEOTIDE SEQUENCE [LARGE SCALE MRNA]</scope>
    <source>
        <tissue>Tongue</tissue>
    </source>
</reference>
<reference key="2">
    <citation type="journal article" date="2004" name="Genome Res.">
        <title>The status, quality, and expansion of the NIH full-length cDNA project: the Mammalian Gene Collection (MGC).</title>
        <authorList>
            <consortium name="The MGC Project Team"/>
        </authorList>
    </citation>
    <scope>NUCLEOTIDE SEQUENCE [LARGE SCALE MRNA]</scope>
</reference>
<reference key="3">
    <citation type="journal article" date="2009" name="Hum. Mol. Genet.">
        <title>Homozygous disruption of PDZD7 by reciprocal translocation in a consanguineous family: a new member of the Usher syndrome protein interactome causing congenital hearing impairment.</title>
        <authorList>
            <person name="Schneider E."/>
            <person name="Marker T."/>
            <person name="Daser A."/>
            <person name="Frey-Mahn G."/>
            <person name="Beyer V."/>
            <person name="Farcas R."/>
            <person name="Schneider-Ratzke B."/>
            <person name="Kohlschmidt N."/>
            <person name="Grossmann B."/>
            <person name="Bauss K."/>
            <person name="Napiontek U."/>
            <person name="Keilmann A."/>
            <person name="Bartsch O."/>
            <person name="Zechner U."/>
            <person name="Wolfrum U."/>
            <person name="Haaf T."/>
        </authorList>
    </citation>
    <scope>INTERACTION WITH PDZD7</scope>
</reference>
<reference key="4">
    <citation type="journal article" date="2011" name="Proc. Natl. Acad. Sci. U.S.A.">
        <title>Myosin VIIa and sans localization at stereocilia upper tip-link density implicates these Usher syndrome proteins in mechanotransduction.</title>
        <authorList>
            <person name="Grati M."/>
            <person name="Kachar B."/>
        </authorList>
    </citation>
    <scope>FUNCTION</scope>
    <scope>SUBCELLULAR LOCATION</scope>
    <scope>IDENTIFICATION IN A COMPLEX WITH MYO7A; USH1C AND USH1G</scope>
</reference>
<reference key="5">
    <citation type="journal article" date="2014" name="Hum. Mol. Genet.">
        <title>Phosphorylation of the Usher syndrome 1G protein SANS controls Magi2-mediated endocytosis.</title>
        <authorList>
            <person name="Bauss K."/>
            <person name="Knapp B."/>
            <person name="Jores P."/>
            <person name="Roepman R."/>
            <person name="Kremer H."/>
            <person name="Wijk E.V."/>
            <person name="Maerker T."/>
            <person name="Wolfrum U."/>
        </authorList>
    </citation>
    <scope>FUNCTION</scope>
    <scope>INTERACTION WITH MAGI2</scope>
    <scope>PHOSPHORYLATION AT SER-422</scope>
    <scope>MUTAGENESIS OF SER-422</scope>
</reference>
<reference key="6">
    <citation type="journal article" date="2019" name="Front. Cell Dev. Biol.">
        <title>SANS (USH1G) Molecularly Links the Human Usher Syndrome Protein Network to the Intraflagellar Transport Module by Direct Binding to IFT-B Proteins.</title>
        <authorList>
            <person name="Sorusch N."/>
            <person name="Yildirim A."/>
            <person name="Knapp B."/>
            <person name="Janson J."/>
            <person name="Fleck W."/>
            <person name="Scharf C."/>
            <person name="Wolfrum U."/>
        </authorList>
    </citation>
    <scope>INTERACTION WITH IFT20; IFT52 AND IFT57</scope>
    <scope>CHARACTERIZATION OF VARIANT USH1G PRO-48 AND VARIANT VAL-104</scope>
</reference>
<reference key="7">
    <citation type="journal article" date="2021" name="Nucleic Acids Res.">
        <title>SANS (USH1G) regulates pre-mRNA splicing by mediating the intra-nuclear transfer of tri-snRNP complexes.</title>
        <authorList>
            <person name="Yildirim A."/>
            <person name="Mozaffari-Jovin S."/>
            <person name="Wallisch A.K."/>
            <person name="Schaefer J."/>
            <person name="Ludwig S.E.J."/>
            <person name="Urlaub H."/>
            <person name="Luehrmann R."/>
            <person name="Wolfrum U."/>
        </authorList>
    </citation>
    <scope>FUNCTION</scope>
    <scope>INTERACTION WITH SF3B1; PRPF6; PRPF31; SON AND U4/U6.U5 TRI-SNRNP COMPLEX</scope>
    <scope>SUBCELLULAR LOCATION</scope>
    <scope>CHARACTERIZATION OF VARIANT VAL-104</scope>
</reference>
<reference key="8">
    <citation type="journal article" date="2010" name="Proc. Natl. Acad. Sci. U.S.A.">
        <title>The structure of the harmonin/sans complex reveals an unexpected interaction mode of the two Usher syndrome proteins.</title>
        <authorList>
            <person name="Yan J."/>
            <person name="Pan L."/>
            <person name="Chen X."/>
            <person name="Wu L."/>
            <person name="Zhang M."/>
        </authorList>
    </citation>
    <scope>X-RAY CRYSTALLOGRAPHY (2.3 ANGSTROMS) OF 388-461 IN COMPLEX WITH USH1C</scope>
    <scope>INTERACTION WITH USH1C</scope>
    <scope>SUBCELLULAR LOCATION</scope>
    <scope>CHARACTERIZATION OF VARIANT USH1G VAL-458</scope>
</reference>
<reference key="9">
    <citation type="journal article" date="2011" name="Science">
        <title>Structure of MyTH4-FERM domains in myosin VIIa tail bound to cargo.</title>
        <authorList>
            <person name="Wu L."/>
            <person name="Pan L."/>
            <person name="Wei Z."/>
            <person name="Zhang M."/>
        </authorList>
    </citation>
    <scope>X-RAY CRYSTALLOGRAPHY (2.8 ANGSTROMS) OF 295-390 IN COMPLEX WITH MYO7A</scope>
    <scope>STRUCTURE BY NMR OF 370-380</scope>
    <scope>INTERACTION WITH MYO7A</scope>
    <scope>MUTAGENESIS OF PHE-307; PHE-317 AND TRP-374</scope>
</reference>
<reference key="10">
    <citation type="journal article" date="2003" name="Hum. Mol. Genet.">
        <title>Usher syndrome type I G (USH1G) is caused by mutations in the gene encoding SANS, a protein that associates with the USH1C protein, harmonin.</title>
        <authorList>
            <person name="Weil D."/>
            <person name="El-Amraoui A."/>
            <person name="Masmoudi S."/>
            <person name="Mustapha M."/>
            <person name="Kikkawa Y."/>
            <person name="Laine S."/>
            <person name="Delmaghani S."/>
            <person name="Adato A."/>
            <person name="Nadifi S."/>
            <person name="Zina Z.B."/>
            <person name="Hamel C."/>
            <person name="Gal A."/>
            <person name="Ayadi H."/>
            <person name="Yonekawa H."/>
            <person name="Petit C."/>
        </authorList>
    </citation>
    <scope>VARIANT USH1G PRO-48</scope>
    <scope>INTERACTION WITH USH1C</scope>
    <scope>TISSUE SPECIFICITY</scope>
    <scope>POSSIBLE FUNCTION</scope>
</reference>
<reference key="11">
    <citation type="journal article" date="2005" name="J. Mol. Med.">
        <title>A novel D458V mutation in the SANS PDZ binding motif causes atypical Usher syndrome.</title>
        <authorList>
            <person name="Kalay E."/>
            <person name="de Brouwer A.P.M."/>
            <person name="Caylan R."/>
            <person name="Nabuurs S.B."/>
            <person name="Wollnik B."/>
            <person name="Karaguzel A."/>
            <person name="Heister J.G.A.M."/>
            <person name="Erdol H."/>
            <person name="Cremers F.P.M."/>
            <person name="Cremers C.W.R.J."/>
            <person name="Brunner H.G."/>
            <person name="Kremer H."/>
        </authorList>
    </citation>
    <scope>VARIANT USH1G VAL-458</scope>
</reference>
<reference key="12">
    <citation type="journal article" date="2015" name="Ear Hear.">
        <title>Nonsyndromic hearing loss caused by USH1G mutations: widening the USH1G disease spectrum.</title>
        <authorList>
            <person name="Oonk A.M."/>
            <person name="van Huet R.A."/>
            <person name="Leijendeckers J.M."/>
            <person name="Oostrik J."/>
            <person name="Venselaar H."/>
            <person name="van Wijk E."/>
            <person name="Beynon A."/>
            <person name="Kunst H.P."/>
            <person name="Hoyng C.B."/>
            <person name="Kremer H."/>
            <person name="Schraders M."/>
            <person name="Pennings R.J."/>
        </authorList>
    </citation>
    <scope>INVOLVEMENT IN NON-SYNDROMIC SENSORINEURAL HEARING LOSS</scope>
    <scope>VARIANT VAL-104</scope>
</reference>
<gene>
    <name type="primary">USH1G</name>
    <name type="synonym">SANS</name>
</gene>
<comment type="function">
    <text evidence="9 10 13">Plays a role in pre-mRNA splicing by regulating the release and transfer of U4/U6.U5 tri-small nuclear ribonucleoprotein (tri-snRNP) complexes from their assembly site in Cajal bodies to nuclear speckles, thereby contributing to the assembly of the pre-catalytic spliceosome on target pre-mRNAs (PubMed:34023904). May also participate in recycling of snRNPs back to Cajal bodies during splicing (PubMed:34023904). Plays a role in regulating MAGI2-mediated endocytosis (PubMed:24608321). Anchoring/scaffolding protein that is a part of the functional network formed by USH1C, USH1G, CDH23 and MYO7A that mediates mechanotransduction in cochlear hair cells. Required for normal development and maintenance of cochlear hair cell bundles. Required for normal hearing.</text>
</comment>
<comment type="subunit">
    <text evidence="2 4 6 7 8 9 10 12 13">Part of a complex composed of USH1C, USH1G and MYO7A (PubMed:21311020, PubMed:21709241). Interacts with USH1C (via the first PDZ domain) (PubMed:12588794, PubMed:20142502). Interacts with PDZD7 (PubMed:19028668). Interacts with CDH23 and PCDH15; these interactions may recruit USH1G to the plasma membrane (By similarity). Interacts with intraflagellar transport proteins IFT20, IFT52 and IFT57 (PubMed:31637240). Interacts with splicing factors SF3B1, PRPF6, PRPF31 and SON (PubMed:34023904). Interacts with the U4/U6.U5 tri-small nuclear ribonucleoprotein (tri-snRNP) complex in the presence of pre-mRNAs (PubMed:34023904). Interacts (via SAM domain) with MAGI2 (via PDZ 6 domain); the interaction is triggered by phosphorylation of USH1G by CK2 and negatively regulates MAGI2-mediated endocytosis (PubMed:24608321).</text>
</comment>
<comment type="interaction">
    <interactant intactId="EBI-8601749">
        <id>Q495M9</id>
    </interactant>
    <interactant intactId="EBI-8643161">
        <id>Q9NX04</id>
        <label>AIRIM</label>
    </interactant>
    <organismsDiffer>false</organismsDiffer>
    <experiments>3</experiments>
</comment>
<comment type="interaction">
    <interactant intactId="EBI-8601749">
        <id>Q495M9</id>
    </interactant>
    <interactant intactId="EBI-17183751">
        <id>X5D778</id>
        <label>ANKRD11</label>
    </interactant>
    <organismsDiffer>false</organismsDiffer>
    <experiments>3</experiments>
</comment>
<comment type="interaction">
    <interactant intactId="EBI-8601749">
        <id>Q495M9</id>
    </interactant>
    <interactant intactId="EBI-358049">
        <id>Q13895</id>
        <label>BYSL</label>
    </interactant>
    <organismsDiffer>false</organismsDiffer>
    <experiments>3</experiments>
</comment>
<comment type="interaction">
    <interactant intactId="EBI-8601749">
        <id>Q495M9</id>
    </interactant>
    <interactant intactId="EBI-11530605">
        <id>Q9H257-2</id>
        <label>CARD9</label>
    </interactant>
    <organismsDiffer>false</organismsDiffer>
    <experiments>3</experiments>
</comment>
<comment type="interaction">
    <interactant intactId="EBI-8601749">
        <id>Q495M9</id>
    </interactant>
    <interactant intactId="EBI-712912">
        <id>Q9HC52</id>
        <label>CBX8</label>
    </interactant>
    <organismsDiffer>false</organismsDiffer>
    <experiments>3</experiments>
</comment>
<comment type="interaction">
    <interactant intactId="EBI-8601749">
        <id>Q495M9</id>
    </interactant>
    <interactant intactId="EBI-77321">
        <id>Q9UER7</id>
        <label>DAXX</label>
    </interactant>
    <organismsDiffer>false</organismsDiffer>
    <experiments>3</experiments>
</comment>
<comment type="interaction">
    <interactant intactId="EBI-8601749">
        <id>Q495M9</id>
    </interactant>
    <interactant intactId="EBI-351257">
        <id>P26196</id>
        <label>DDX6</label>
    </interactant>
    <organismsDiffer>false</organismsDiffer>
    <experiments>3</experiments>
</comment>
<comment type="interaction">
    <interactant intactId="EBI-8601749">
        <id>Q495M9</id>
    </interactant>
    <interactant intactId="EBI-744099">
        <id>Q9H0I2</id>
        <label>ENKD1</label>
    </interactant>
    <organismsDiffer>false</organismsDiffer>
    <experiments>3</experiments>
</comment>
<comment type="interaction">
    <interactant intactId="EBI-8601749">
        <id>Q495M9</id>
    </interactant>
    <interactant intactId="EBI-7225287">
        <id>Q96MY7</id>
        <label>FAM161B</label>
    </interactant>
    <organismsDiffer>false</organismsDiffer>
    <experiments>4</experiments>
</comment>
<comment type="interaction">
    <interactant intactId="EBI-8601749">
        <id>Q495M9</id>
    </interactant>
    <interactant intactId="EBI-348399">
        <id>P22607</id>
        <label>FGFR3</label>
    </interactant>
    <organismsDiffer>false</organismsDiffer>
    <experiments>3</experiments>
</comment>
<comment type="interaction">
    <interactant intactId="EBI-8601749">
        <id>Q495M9</id>
    </interactant>
    <interactant intactId="EBI-744104">
        <id>P55040</id>
        <label>GEM</label>
    </interactant>
    <organismsDiffer>false</organismsDiffer>
    <experiments>3</experiments>
</comment>
<comment type="interaction">
    <interactant intactId="EBI-8601749">
        <id>Q495M9</id>
    </interactant>
    <interactant intactId="EBI-3893317">
        <id>P09067</id>
        <label>HOXB5</label>
    </interactant>
    <organismsDiffer>false</organismsDiffer>
    <experiments>3</experiments>
</comment>
<comment type="interaction">
    <interactant intactId="EBI-8601749">
        <id>Q495M9</id>
    </interactant>
    <interactant intactId="EBI-350145">
        <id>P01112</id>
        <label>HRAS</label>
    </interactant>
    <organismsDiffer>false</organismsDiffer>
    <experiments>3</experiments>
</comment>
<comment type="interaction">
    <interactant intactId="EBI-8601749">
        <id>Q495M9</id>
    </interactant>
    <interactant intactId="EBI-517086">
        <id>O43464</id>
        <label>HTRA2</label>
    </interactant>
    <organismsDiffer>false</organismsDiffer>
    <experiments>3</experiments>
</comment>
<comment type="interaction">
    <interactant intactId="EBI-8601749">
        <id>Q495M9</id>
    </interactant>
    <interactant intactId="EBI-466029">
        <id>P42858</id>
        <label>HTT</label>
    </interactant>
    <organismsDiffer>false</organismsDiffer>
    <experiments>3</experiments>
</comment>
<comment type="interaction">
    <interactant intactId="EBI-8601749">
        <id>Q495M9</id>
    </interactant>
    <interactant intactId="EBI-715611">
        <id>Q9C086</id>
        <label>INO80B</label>
    </interactant>
    <organismsDiffer>false</organismsDiffer>
    <experiments>3</experiments>
</comment>
<comment type="interaction">
    <interactant intactId="EBI-8601749">
        <id>Q495M9</id>
    </interactant>
    <interactant intactId="EBI-14069005">
        <id>Q9BVG8-5</id>
        <label>KIFC3</label>
    </interactant>
    <organismsDiffer>false</organismsDiffer>
    <experiments>3</experiments>
</comment>
<comment type="interaction">
    <interactant intactId="EBI-8601749">
        <id>Q495M9</id>
    </interactant>
    <interactant intactId="EBI-11959475">
        <id>P25791-3</id>
        <label>LMO2</label>
    </interactant>
    <organismsDiffer>false</organismsDiffer>
    <experiments>3</experiments>
</comment>
<comment type="interaction">
    <interactant intactId="EBI-8601749">
        <id>Q495M9</id>
    </interactant>
    <interactant intactId="EBI-10178578">
        <id>I6L9F6</id>
        <label>NEFL</label>
    </interactant>
    <organismsDiffer>false</organismsDiffer>
    <experiments>3</experiments>
</comment>
<comment type="interaction">
    <interactant intactId="EBI-8601749">
        <id>Q495M9</id>
    </interactant>
    <interactant intactId="EBI-1383852">
        <id>P54646</id>
        <label>PRKAA2</label>
    </interactant>
    <organismsDiffer>false</organismsDiffer>
    <experiments>3</experiments>
</comment>
<comment type="interaction">
    <interactant intactId="EBI-8601749">
        <id>Q495M9</id>
    </interactant>
    <interactant intactId="EBI-1567797">
        <id>Q8WWY3</id>
        <label>PRPF31</label>
    </interactant>
    <organismsDiffer>false</organismsDiffer>
    <experiments>3</experiments>
</comment>
<comment type="interaction">
    <interactant intactId="EBI-8601749">
        <id>Q495M9</id>
    </interactant>
    <interactant intactId="EBI-752074">
        <id>P41219</id>
        <label>PRPH</label>
    </interactant>
    <organismsDiffer>false</organismsDiffer>
    <experiments>3</experiments>
</comment>
<comment type="interaction">
    <interactant intactId="EBI-8601749">
        <id>Q495M9</id>
    </interactant>
    <interactant intactId="EBI-748391">
        <id>Q9BWG6</id>
        <label>SCNM1</label>
    </interactant>
    <organismsDiffer>false</organismsDiffer>
    <experiments>3</experiments>
</comment>
<comment type="interaction">
    <interactant intactId="EBI-8601749">
        <id>Q495M9</id>
    </interactant>
    <interactant intactId="EBI-11955057">
        <id>Q8N8B7-2</id>
        <label>TCEANC</label>
    </interactant>
    <organismsDiffer>false</organismsDiffer>
    <experiments>3</experiments>
</comment>
<comment type="interaction">
    <interactant intactId="EBI-8601749">
        <id>Q495M9</id>
    </interactant>
    <interactant intactId="EBI-954308">
        <id>Q9Y6N9</id>
        <label>USH1C</label>
    </interactant>
    <organismsDiffer>false</organismsDiffer>
    <experiments>14</experiments>
</comment>
<comment type="interaction">
    <interactant intactId="EBI-8601749">
        <id>Q495M9</id>
    </interactant>
    <interactant intactId="EBI-8601749">
        <id>Q495M9</id>
        <label>USH1G</label>
    </interactant>
    <organismsDiffer>false</organismsDiffer>
    <experiments>2</experiments>
</comment>
<comment type="interaction">
    <interactant intactId="EBI-8601749">
        <id>Q495M9</id>
    </interactant>
    <interactant intactId="EBI-25900580">
        <id>Q9Y649</id>
    </interactant>
    <organismsDiffer>false</organismsDiffer>
    <experiments>3</experiments>
</comment>
<comment type="subcellular location">
    <subcellularLocation>
        <location>Cytoplasm</location>
        <location>Cytosol</location>
    </subcellularLocation>
    <subcellularLocation>
        <location>Cytoplasm</location>
        <location>Cytoskeleton</location>
    </subcellularLocation>
    <subcellularLocation>
        <location evidence="2">Cell membrane</location>
        <topology evidence="14">Peripheral membrane protein</topology>
    </subcellularLocation>
    <subcellularLocation>
        <location evidence="2">Cell projection</location>
        <location evidence="2">Cilium</location>
    </subcellularLocation>
    <subcellularLocation>
        <location evidence="13">Nucleus speckle</location>
    </subcellularLocation>
    <subcellularLocation>
        <location evidence="13">Nucleus</location>
        <location evidence="13">Cajal body</location>
    </subcellularLocation>
    <subcellularLocation>
        <location evidence="2">Cytoplasm</location>
        <location evidence="2">Cytoskeleton</location>
        <location evidence="2">Microtubule organizing center</location>
        <location evidence="2">Centrosome</location>
    </subcellularLocation>
    <subcellularLocation>
        <location evidence="2">Photoreceptor inner segment</location>
    </subcellularLocation>
    <text evidence="1 2">Detected at the tip of cochlear hair cell stereocilia. Recruited to the cell membrane via interaction with CDH23 or PCDH15 (By similarity). In photoreceptor cilia, detected predominantly at the cilium base (By similarity). Expressed in the pericentriolar region of the centrosome (By similarity).</text>
</comment>
<comment type="tissue specificity">
    <text evidence="4">Expressed in vestibule of the inner ear, eye and small intestine.</text>
</comment>
<comment type="disease" evidence="4 5 7 12">
    <disease id="DI-01117">
        <name>Usher syndrome 1G</name>
        <acronym>USH1G</acronym>
        <description>USH is a genetically heterogeneous condition characterized by the association of retinitis pigmentosa with sensorineural deafness. Age at onset and differences in auditory and vestibular function distinguish Usher syndrome type 1 (USH1), Usher syndrome type 2 (USH2) and Usher syndrome type 3 (USH3). USH1 is characterized by profound congenital sensorineural deafness, absent vestibular function and prepubertal onset of progressive retinitis pigmentosa leading to blindness.</description>
        <dbReference type="MIM" id="606943"/>
    </disease>
    <text>The disease is caused by variants affecting the gene represented in this entry.</text>
</comment>
<comment type="disease">
    <text evidence="11">The first cases with non-syndromic sensorineural hearing loss based on mutations in USH1G. The hearing loss has an onset during early childhood, is progressive, and has a downsloping audiogram configuration. Ophthalmic and vestibular abnormalities are absent.</text>
</comment>
<proteinExistence type="evidence at protein level"/>
<protein>
    <recommendedName>
        <fullName evidence="14">pre-mRNA splicing regulator USH1G</fullName>
    </recommendedName>
    <alternativeName>
        <fullName>Scaffold protein containing ankyrin repeats and SAM domain</fullName>
    </alternativeName>
    <alternativeName>
        <fullName>Usher syndrome type-1G protein</fullName>
    </alternativeName>
</protein>
<sequence length="461" mass="51489">MNDQYHRAARDGYLELLKEATRKELNAPDEDGMTPTLWAAYHGNLESLRLIVSRGGDPDKCDIWGNTPLHLAASNGHLHCLSFLVSFGANIWCLDNDYHTPLDMAAMKGHMECVRYLDSIAAKQSSLNPKLVGKLKDKAFREAERRIRECAKLQRRHHERMERRYRRELAERSDTLSFSSLTSSTLSRRLQHLALGSHLPYSQATLHGTARGKTKMQKKLERRKQGGEGTFKVSEDGRKSARSLSGLQLGSDVMFVRQGTYANPKEWGRAPLRDMFLSDEDSVSRATLAAEPAHSEVSTDSGHDSLFTRPGLGTMVFRRNYLSSGLHGLGREDGGLDGVGAPRGRLQSSPSLDDDSLGSANSLQDRSCGEELPWDELDLGLDEDLEPETSPLETFLASLHMEDFAALLRQEKIDLEALMLCSDLDLRSISVPLGPRKKILGAVRRRRQAMERPPALEDTEL</sequence>